<protein>
    <recommendedName>
        <fullName>UPF0758 protein SPT_1135</fullName>
    </recommendedName>
</protein>
<feature type="chain" id="PRO_1000195311" description="UPF0758 protein SPT_1135">
    <location>
        <begin position="1"/>
        <end position="226"/>
    </location>
</feature>
<feature type="domain" description="MPN" evidence="1">
    <location>
        <begin position="103"/>
        <end position="225"/>
    </location>
</feature>
<feature type="short sequence motif" description="JAMM motif" evidence="1">
    <location>
        <begin position="174"/>
        <end position="187"/>
    </location>
</feature>
<feature type="binding site" evidence="1">
    <location>
        <position position="174"/>
    </location>
    <ligand>
        <name>Zn(2+)</name>
        <dbReference type="ChEBI" id="CHEBI:29105"/>
        <note>catalytic</note>
    </ligand>
</feature>
<feature type="binding site" evidence="1">
    <location>
        <position position="176"/>
    </location>
    <ligand>
        <name>Zn(2+)</name>
        <dbReference type="ChEBI" id="CHEBI:29105"/>
        <note>catalytic</note>
    </ligand>
</feature>
<feature type="binding site" evidence="1">
    <location>
        <position position="187"/>
    </location>
    <ligand>
        <name>Zn(2+)</name>
        <dbReference type="ChEBI" id="CHEBI:29105"/>
        <note>catalytic</note>
    </ligand>
</feature>
<keyword id="KW-0378">Hydrolase</keyword>
<keyword id="KW-0479">Metal-binding</keyword>
<keyword id="KW-0482">Metalloprotease</keyword>
<keyword id="KW-0645">Protease</keyword>
<keyword id="KW-0862">Zinc</keyword>
<gene>
    <name type="ordered locus">SPT_1135</name>
</gene>
<comment type="similarity">
    <text evidence="2">Belongs to the UPF0758 family.</text>
</comment>
<name>Y1135_STRZT</name>
<reference key="1">
    <citation type="journal article" date="2010" name="Genome Biol.">
        <title>Structure and dynamics of the pan-genome of Streptococcus pneumoniae and closely related species.</title>
        <authorList>
            <person name="Donati C."/>
            <person name="Hiller N.L."/>
            <person name="Tettelin H."/>
            <person name="Muzzi A."/>
            <person name="Croucher N.J."/>
            <person name="Angiuoli S.V."/>
            <person name="Oggioni M."/>
            <person name="Dunning Hotopp J.C."/>
            <person name="Hu F.Z."/>
            <person name="Riley D.R."/>
            <person name="Covacci A."/>
            <person name="Mitchell T.J."/>
            <person name="Bentley S.D."/>
            <person name="Kilian M."/>
            <person name="Ehrlich G.D."/>
            <person name="Rappuoli R."/>
            <person name="Moxon E.R."/>
            <person name="Masignani V."/>
        </authorList>
    </citation>
    <scope>NUCLEOTIDE SEQUENCE [LARGE SCALE GENOMIC DNA]</scope>
    <source>
        <strain>Taiwan19F-14</strain>
    </source>
</reference>
<organism>
    <name type="scientific">Streptococcus pneumoniae (strain Taiwan19F-14)</name>
    <dbReference type="NCBI Taxonomy" id="487213"/>
    <lineage>
        <taxon>Bacteria</taxon>
        <taxon>Bacillati</taxon>
        <taxon>Bacillota</taxon>
        <taxon>Bacilli</taxon>
        <taxon>Lactobacillales</taxon>
        <taxon>Streptococcaceae</taxon>
        <taxon>Streptococcus</taxon>
    </lineage>
</organism>
<sequence length="226" mass="25536">MYSISFQEDSLLPRERLAKEGVEALSNQELLAILLRTGTRQASVFEIAQKVLNNLSSLTDLKKMTLQELQSLSGIGRVKAIELQAMIELGHRIHKHETLEMESILSSQKLAKKMQQELGDKKQEHLVALYLNTQNQIIHQQTIFIGSVTRSIAEPREILHYAIKHMATSLILVHNHPSGAVAPSQNDDHVTKLVKEACELMGIVLLDHLIVSHSNYFSYREKTDLI</sequence>
<evidence type="ECO:0000255" key="1">
    <source>
        <dbReference type="PROSITE-ProRule" id="PRU01182"/>
    </source>
</evidence>
<evidence type="ECO:0000305" key="2"/>
<proteinExistence type="inferred from homology"/>
<accession>C1CRJ1</accession>
<dbReference type="EMBL" id="CP000921">
    <property type="protein sequence ID" value="ACO23888.1"/>
    <property type="molecule type" value="Genomic_DNA"/>
</dbReference>
<dbReference type="SMR" id="C1CRJ1"/>
<dbReference type="KEGG" id="snt:SPT_1135"/>
<dbReference type="HOGENOM" id="CLU_073529_0_2_9"/>
<dbReference type="GO" id="GO:0046872">
    <property type="term" value="F:metal ion binding"/>
    <property type="evidence" value="ECO:0007669"/>
    <property type="project" value="UniProtKB-KW"/>
</dbReference>
<dbReference type="GO" id="GO:0008237">
    <property type="term" value="F:metallopeptidase activity"/>
    <property type="evidence" value="ECO:0007669"/>
    <property type="project" value="UniProtKB-KW"/>
</dbReference>
<dbReference type="GO" id="GO:0006508">
    <property type="term" value="P:proteolysis"/>
    <property type="evidence" value="ECO:0007669"/>
    <property type="project" value="UniProtKB-KW"/>
</dbReference>
<dbReference type="CDD" id="cd08071">
    <property type="entry name" value="MPN_DUF2466"/>
    <property type="match status" value="1"/>
</dbReference>
<dbReference type="Gene3D" id="3.40.140.10">
    <property type="entry name" value="Cytidine Deaminase, domain 2"/>
    <property type="match status" value="1"/>
</dbReference>
<dbReference type="InterPro" id="IPR037518">
    <property type="entry name" value="MPN"/>
</dbReference>
<dbReference type="InterPro" id="IPR025657">
    <property type="entry name" value="RadC_JAB"/>
</dbReference>
<dbReference type="InterPro" id="IPR010994">
    <property type="entry name" value="RuvA_2-like"/>
</dbReference>
<dbReference type="InterPro" id="IPR001405">
    <property type="entry name" value="UPF0758"/>
</dbReference>
<dbReference type="InterPro" id="IPR020891">
    <property type="entry name" value="UPF0758_CS"/>
</dbReference>
<dbReference type="InterPro" id="IPR046778">
    <property type="entry name" value="UPF0758_N"/>
</dbReference>
<dbReference type="NCBIfam" id="NF000642">
    <property type="entry name" value="PRK00024.1"/>
    <property type="match status" value="1"/>
</dbReference>
<dbReference type="NCBIfam" id="TIGR00608">
    <property type="entry name" value="radc"/>
    <property type="match status" value="1"/>
</dbReference>
<dbReference type="PANTHER" id="PTHR30471">
    <property type="entry name" value="DNA REPAIR PROTEIN RADC"/>
    <property type="match status" value="1"/>
</dbReference>
<dbReference type="PANTHER" id="PTHR30471:SF3">
    <property type="entry name" value="UPF0758 PROTEIN YEES-RELATED"/>
    <property type="match status" value="1"/>
</dbReference>
<dbReference type="Pfam" id="PF04002">
    <property type="entry name" value="RadC"/>
    <property type="match status" value="1"/>
</dbReference>
<dbReference type="Pfam" id="PF20582">
    <property type="entry name" value="UPF0758_N"/>
    <property type="match status" value="1"/>
</dbReference>
<dbReference type="SUPFAM" id="SSF47781">
    <property type="entry name" value="RuvA domain 2-like"/>
    <property type="match status" value="1"/>
</dbReference>
<dbReference type="PROSITE" id="PS50249">
    <property type="entry name" value="MPN"/>
    <property type="match status" value="1"/>
</dbReference>
<dbReference type="PROSITE" id="PS01302">
    <property type="entry name" value="UPF0758"/>
    <property type="match status" value="1"/>
</dbReference>